<keyword id="KW-0479">Metal-binding</keyword>
<keyword id="KW-0500">Molybdenum</keyword>
<keyword id="KW-0560">Oxidoreductase</keyword>
<keyword id="KW-0574">Periplasm</keyword>
<keyword id="KW-0732">Signal</keyword>
<dbReference type="EC" id="1.8.5.-" evidence="1"/>
<dbReference type="EMBL" id="CP000687">
    <property type="protein sequence ID" value="ABY70420.1"/>
    <property type="molecule type" value="Genomic_DNA"/>
</dbReference>
<dbReference type="RefSeq" id="WP_012263408.1">
    <property type="nucleotide sequence ID" value="NC_010278.1"/>
</dbReference>
<dbReference type="SMR" id="B0BT06"/>
<dbReference type="KEGG" id="apj:APJL_1870"/>
<dbReference type="HOGENOM" id="CLU_045520_0_0_6"/>
<dbReference type="Proteomes" id="UP000008547">
    <property type="component" value="Chromosome"/>
</dbReference>
<dbReference type="GO" id="GO:0042597">
    <property type="term" value="C:periplasmic space"/>
    <property type="evidence" value="ECO:0007669"/>
    <property type="project" value="UniProtKB-SubCell"/>
</dbReference>
<dbReference type="GO" id="GO:0046872">
    <property type="term" value="F:metal ion binding"/>
    <property type="evidence" value="ECO:0007669"/>
    <property type="project" value="UniProtKB-KW"/>
</dbReference>
<dbReference type="GO" id="GO:0043546">
    <property type="term" value="F:molybdopterin cofactor binding"/>
    <property type="evidence" value="ECO:0007669"/>
    <property type="project" value="UniProtKB-UniRule"/>
</dbReference>
<dbReference type="GO" id="GO:0016672">
    <property type="term" value="F:oxidoreductase activity, acting on a sulfur group of donors, quinone or similar compound as acceptor"/>
    <property type="evidence" value="ECO:0007669"/>
    <property type="project" value="UniProtKB-UniRule"/>
</dbReference>
<dbReference type="GO" id="GO:0030091">
    <property type="term" value="P:protein repair"/>
    <property type="evidence" value="ECO:0007669"/>
    <property type="project" value="UniProtKB-UniRule"/>
</dbReference>
<dbReference type="Gene3D" id="3.90.420.10">
    <property type="entry name" value="Oxidoreductase, molybdopterin-binding domain"/>
    <property type="match status" value="1"/>
</dbReference>
<dbReference type="HAMAP" id="MF_01206">
    <property type="entry name" value="MsrP"/>
    <property type="match status" value="1"/>
</dbReference>
<dbReference type="InterPro" id="IPR022867">
    <property type="entry name" value="MsrP"/>
</dbReference>
<dbReference type="InterPro" id="IPR000572">
    <property type="entry name" value="OxRdtase_Mopterin-bd_dom"/>
</dbReference>
<dbReference type="InterPro" id="IPR036374">
    <property type="entry name" value="OxRdtase_Mopterin-bd_sf"/>
</dbReference>
<dbReference type="NCBIfam" id="NF003767">
    <property type="entry name" value="PRK05363.1"/>
    <property type="match status" value="1"/>
</dbReference>
<dbReference type="PANTHER" id="PTHR43032">
    <property type="entry name" value="PROTEIN-METHIONINE-SULFOXIDE REDUCTASE"/>
    <property type="match status" value="1"/>
</dbReference>
<dbReference type="PANTHER" id="PTHR43032:SF3">
    <property type="entry name" value="PROTEIN-METHIONINE-SULFOXIDE REDUCTASE CATALYTIC SUBUNIT MSRP"/>
    <property type="match status" value="1"/>
</dbReference>
<dbReference type="Pfam" id="PF00174">
    <property type="entry name" value="Oxidored_molyb"/>
    <property type="match status" value="1"/>
</dbReference>
<dbReference type="SUPFAM" id="SSF56524">
    <property type="entry name" value="Oxidoreductase molybdopterin-binding domain"/>
    <property type="match status" value="1"/>
</dbReference>
<accession>B0BT06</accession>
<evidence type="ECO:0000255" key="1">
    <source>
        <dbReference type="HAMAP-Rule" id="MF_01206"/>
    </source>
</evidence>
<organism>
    <name type="scientific">Actinobacillus pleuropneumoniae serotype 3 (strain JL03)</name>
    <dbReference type="NCBI Taxonomy" id="434271"/>
    <lineage>
        <taxon>Bacteria</taxon>
        <taxon>Pseudomonadati</taxon>
        <taxon>Pseudomonadota</taxon>
        <taxon>Gammaproteobacteria</taxon>
        <taxon>Pasteurellales</taxon>
        <taxon>Pasteurellaceae</taxon>
        <taxon>Actinobacillus</taxon>
    </lineage>
</organism>
<sequence>MNRFTRYDVTPEVIFNQRRQIIKAMGLGAAALSLPNIGFAAEKSDQLKALNFKDAPKGDFLLTPENKVTGYNNFYEFGVDKASPAKFAKDFKTDPWSLEIAGEVENPFVLNHAQLFNTFPLEERIYRFRCVEAWSMVIPWVGFELARLVEMAKPTSKAKFVIFHTLHDPEQMPGQKNKFFGGGIDYPYVEALTIEEAMNPLTLLSVGLYGKMLPPQNGAPIRLVVPWKYGFKSIKSIVKITFSETRPRTTWEKLAPHEYGFYANVNPNVDHPRWSQASERVIGSGGLLAVKRQDTLMFNGYEKEVAHLYKGLDLKVNF</sequence>
<reference key="1">
    <citation type="journal article" date="2008" name="PLoS ONE">
        <title>Genome biology of Actinobacillus pleuropneumoniae JL03, an isolate of serotype 3 prevalent in China.</title>
        <authorList>
            <person name="Xu Z."/>
            <person name="Zhou Y."/>
            <person name="Li L."/>
            <person name="Zhou R."/>
            <person name="Xiao S."/>
            <person name="Wan Y."/>
            <person name="Zhang S."/>
            <person name="Wang K."/>
            <person name="Li W."/>
            <person name="Li L."/>
            <person name="Jin H."/>
            <person name="Kang M."/>
            <person name="Dalai B."/>
            <person name="Li T."/>
            <person name="Liu L."/>
            <person name="Cheng Y."/>
            <person name="Zhang L."/>
            <person name="Xu T."/>
            <person name="Zheng H."/>
            <person name="Pu S."/>
            <person name="Wang B."/>
            <person name="Gu W."/>
            <person name="Zhang X.L."/>
            <person name="Zhu G.-F."/>
            <person name="Wang S."/>
            <person name="Zhao G.-P."/>
            <person name="Chen H."/>
        </authorList>
    </citation>
    <scope>NUCLEOTIDE SEQUENCE [LARGE SCALE GENOMIC DNA]</scope>
    <source>
        <strain>JL03</strain>
    </source>
</reference>
<proteinExistence type="inferred from homology"/>
<feature type="signal peptide" description="Tat-type signal" evidence="1">
    <location>
        <begin position="1"/>
        <end position="40"/>
    </location>
</feature>
<feature type="chain" id="PRO_1000138708" description="Protein-methionine-sulfoxide reductase catalytic subunit MsrP" evidence="1">
    <location>
        <begin position="41"/>
        <end position="318"/>
    </location>
</feature>
<feature type="binding site" evidence="1">
    <location>
        <position position="72"/>
    </location>
    <ligand>
        <name>Mo-molybdopterin</name>
        <dbReference type="ChEBI" id="CHEBI:71302"/>
    </ligand>
</feature>
<feature type="binding site" evidence="1">
    <location>
        <begin position="75"/>
        <end position="76"/>
    </location>
    <ligand>
        <name>Mo-molybdopterin</name>
        <dbReference type="ChEBI" id="CHEBI:71302"/>
    </ligand>
</feature>
<feature type="binding site" evidence="1">
    <location>
        <position position="130"/>
    </location>
    <ligand>
        <name>Mo-molybdopterin</name>
        <dbReference type="ChEBI" id="CHEBI:71302"/>
    </ligand>
    <ligandPart>
        <name>Mo</name>
        <dbReference type="ChEBI" id="CHEBI:28685"/>
    </ligandPart>
</feature>
<feature type="binding site" evidence="1">
    <location>
        <position position="165"/>
    </location>
    <ligand>
        <name>Mo-molybdopterin</name>
        <dbReference type="ChEBI" id="CHEBI:71302"/>
    </ligand>
</feature>
<feature type="binding site" evidence="1">
    <location>
        <position position="217"/>
    </location>
    <ligand>
        <name>Mo-molybdopterin</name>
        <dbReference type="ChEBI" id="CHEBI:71302"/>
    </ligand>
</feature>
<feature type="binding site" evidence="1">
    <location>
        <position position="222"/>
    </location>
    <ligand>
        <name>Mo-molybdopterin</name>
        <dbReference type="ChEBI" id="CHEBI:71302"/>
    </ligand>
</feature>
<feature type="binding site" evidence="1">
    <location>
        <begin position="233"/>
        <end position="235"/>
    </location>
    <ligand>
        <name>Mo-molybdopterin</name>
        <dbReference type="ChEBI" id="CHEBI:71302"/>
    </ligand>
</feature>
<name>MSRP_ACTPJ</name>
<gene>
    <name evidence="1" type="primary">msrP</name>
    <name type="ordered locus">APJL_1870</name>
</gene>
<comment type="function">
    <text evidence="1">Part of the MsrPQ system that repairs oxidized periplasmic proteins containing methionine sulfoxide residues (Met-O), using respiratory chain electrons. Thus protects these proteins from oxidative-stress damage caused by reactive species of oxygen and chlorine generated by the host defense mechanisms. MsrPQ is essential for the maintenance of envelope integrity under bleach stress, rescuing a wide series of structurally unrelated periplasmic proteins from methionine oxidation. The catalytic subunit MsrP is non-stereospecific, being able to reduce both (R-) and (S-) diastereoisomers of methionine sulfoxide.</text>
</comment>
<comment type="catalytic activity">
    <reaction evidence="1">
        <text>L-methionyl-[protein] + a quinone + H2O = L-methionyl-(S)-S-oxide-[protein] + a quinol</text>
        <dbReference type="Rhea" id="RHEA:51292"/>
        <dbReference type="Rhea" id="RHEA-COMP:12313"/>
        <dbReference type="Rhea" id="RHEA-COMP:12315"/>
        <dbReference type="ChEBI" id="CHEBI:15377"/>
        <dbReference type="ChEBI" id="CHEBI:16044"/>
        <dbReference type="ChEBI" id="CHEBI:24646"/>
        <dbReference type="ChEBI" id="CHEBI:44120"/>
        <dbReference type="ChEBI" id="CHEBI:132124"/>
    </reaction>
</comment>
<comment type="catalytic activity">
    <reaction evidence="1">
        <text>L-methionyl-[protein] + a quinone + H2O = L-methionyl-(R)-S-oxide-[protein] + a quinol</text>
        <dbReference type="Rhea" id="RHEA:51296"/>
        <dbReference type="Rhea" id="RHEA-COMP:12313"/>
        <dbReference type="Rhea" id="RHEA-COMP:12314"/>
        <dbReference type="ChEBI" id="CHEBI:15377"/>
        <dbReference type="ChEBI" id="CHEBI:16044"/>
        <dbReference type="ChEBI" id="CHEBI:24646"/>
        <dbReference type="ChEBI" id="CHEBI:45764"/>
        <dbReference type="ChEBI" id="CHEBI:132124"/>
    </reaction>
</comment>
<comment type="cofactor">
    <cofactor evidence="1">
        <name>Mo-molybdopterin</name>
        <dbReference type="ChEBI" id="CHEBI:71302"/>
    </cofactor>
    <text evidence="1">Binds 1 Mo-molybdopterin (Mo-MPT) cofactor per subunit.</text>
</comment>
<comment type="subunit">
    <text evidence="1">Heterodimer of a catalytic subunit (MsrP) and a heme-binding subunit (MsrQ).</text>
</comment>
<comment type="subcellular location">
    <subcellularLocation>
        <location evidence="1">Periplasm</location>
    </subcellularLocation>
    <text evidence="1">Is attached to the inner membrane when interacting with the MsrQ subunit.</text>
</comment>
<comment type="PTM">
    <text evidence="1">Predicted to be exported by the Tat system. The position of the signal peptide cleavage has not been experimentally proven.</text>
</comment>
<comment type="similarity">
    <text evidence="1">Belongs to the MsrP family.</text>
</comment>
<protein>
    <recommendedName>
        <fullName evidence="1">Protein-methionine-sulfoxide reductase catalytic subunit MsrP</fullName>
        <ecNumber evidence="1">1.8.5.-</ecNumber>
    </recommendedName>
</protein>